<sequence length="127" mass="14307">MRHQKSGRKFNRTSAHREAMFRNMAASLFKHELIKTTLPKAKELRRVAEPLITIGKVDGVANRRLAFARLRDKEAVGKLFVELGSRYATRPGGYLRILKAGFRAGDNAPMAYVELVDRPVVAEEVAE</sequence>
<gene>
    <name evidence="1" type="primary">rplQ</name>
    <name type="ordered locus">XOO3557</name>
</gene>
<accession>Q5GWW0</accession>
<proteinExistence type="inferred from homology"/>
<feature type="chain" id="PRO_1000055994" description="Large ribosomal subunit protein bL17">
    <location>
        <begin position="1"/>
        <end position="127"/>
    </location>
</feature>
<evidence type="ECO:0000255" key="1">
    <source>
        <dbReference type="HAMAP-Rule" id="MF_01368"/>
    </source>
</evidence>
<evidence type="ECO:0000305" key="2"/>
<reference key="1">
    <citation type="journal article" date="2005" name="Nucleic Acids Res.">
        <title>The genome sequence of Xanthomonas oryzae pathovar oryzae KACC10331, the bacterial blight pathogen of rice.</title>
        <authorList>
            <person name="Lee B.-M."/>
            <person name="Park Y.-J."/>
            <person name="Park D.-S."/>
            <person name="Kang H.-W."/>
            <person name="Kim J.-G."/>
            <person name="Song E.-S."/>
            <person name="Park I.-C."/>
            <person name="Yoon U.-H."/>
            <person name="Hahn J.-H."/>
            <person name="Koo B.-S."/>
            <person name="Lee G.-B."/>
            <person name="Kim H."/>
            <person name="Park H.-S."/>
            <person name="Yoon K.-O."/>
            <person name="Kim J.-H."/>
            <person name="Jung C.-H."/>
            <person name="Koh N.-H."/>
            <person name="Seo J.-S."/>
            <person name="Go S.-J."/>
        </authorList>
    </citation>
    <scope>NUCLEOTIDE SEQUENCE [LARGE SCALE GENOMIC DNA]</scope>
    <source>
        <strain>KACC10331 / KXO85</strain>
    </source>
</reference>
<comment type="subunit">
    <text evidence="1">Part of the 50S ribosomal subunit. Contacts protein L32.</text>
</comment>
<comment type="similarity">
    <text evidence="1">Belongs to the bacterial ribosomal protein bL17 family.</text>
</comment>
<organism>
    <name type="scientific">Xanthomonas oryzae pv. oryzae (strain KACC10331 / KXO85)</name>
    <dbReference type="NCBI Taxonomy" id="291331"/>
    <lineage>
        <taxon>Bacteria</taxon>
        <taxon>Pseudomonadati</taxon>
        <taxon>Pseudomonadota</taxon>
        <taxon>Gammaproteobacteria</taxon>
        <taxon>Lysobacterales</taxon>
        <taxon>Lysobacteraceae</taxon>
        <taxon>Xanthomonas</taxon>
    </lineage>
</organism>
<name>RL17_XANOR</name>
<dbReference type="EMBL" id="AE013598">
    <property type="protein sequence ID" value="AAW76811.1"/>
    <property type="molecule type" value="Genomic_DNA"/>
</dbReference>
<dbReference type="SMR" id="Q5GWW0"/>
<dbReference type="STRING" id="291331.XOO3557"/>
<dbReference type="KEGG" id="xoo:XOO3557"/>
<dbReference type="PATRIC" id="fig|291331.8.peg.3946"/>
<dbReference type="HOGENOM" id="CLU_074407_2_0_6"/>
<dbReference type="Proteomes" id="UP000006735">
    <property type="component" value="Chromosome"/>
</dbReference>
<dbReference type="GO" id="GO:0022625">
    <property type="term" value="C:cytosolic large ribosomal subunit"/>
    <property type="evidence" value="ECO:0007669"/>
    <property type="project" value="TreeGrafter"/>
</dbReference>
<dbReference type="GO" id="GO:0003735">
    <property type="term" value="F:structural constituent of ribosome"/>
    <property type="evidence" value="ECO:0007669"/>
    <property type="project" value="InterPro"/>
</dbReference>
<dbReference type="GO" id="GO:0006412">
    <property type="term" value="P:translation"/>
    <property type="evidence" value="ECO:0007669"/>
    <property type="project" value="UniProtKB-UniRule"/>
</dbReference>
<dbReference type="FunFam" id="3.90.1030.10:FF:000001">
    <property type="entry name" value="50S ribosomal protein L17"/>
    <property type="match status" value="1"/>
</dbReference>
<dbReference type="Gene3D" id="3.90.1030.10">
    <property type="entry name" value="Ribosomal protein L17"/>
    <property type="match status" value="1"/>
</dbReference>
<dbReference type="HAMAP" id="MF_01368">
    <property type="entry name" value="Ribosomal_bL17"/>
    <property type="match status" value="1"/>
</dbReference>
<dbReference type="InterPro" id="IPR000456">
    <property type="entry name" value="Ribosomal_bL17"/>
</dbReference>
<dbReference type="InterPro" id="IPR047859">
    <property type="entry name" value="Ribosomal_bL17_CS"/>
</dbReference>
<dbReference type="InterPro" id="IPR036373">
    <property type="entry name" value="Ribosomal_bL17_sf"/>
</dbReference>
<dbReference type="NCBIfam" id="TIGR00059">
    <property type="entry name" value="L17"/>
    <property type="match status" value="1"/>
</dbReference>
<dbReference type="PANTHER" id="PTHR14413:SF16">
    <property type="entry name" value="LARGE RIBOSOMAL SUBUNIT PROTEIN BL17M"/>
    <property type="match status" value="1"/>
</dbReference>
<dbReference type="PANTHER" id="PTHR14413">
    <property type="entry name" value="RIBOSOMAL PROTEIN L17"/>
    <property type="match status" value="1"/>
</dbReference>
<dbReference type="Pfam" id="PF01196">
    <property type="entry name" value="Ribosomal_L17"/>
    <property type="match status" value="1"/>
</dbReference>
<dbReference type="SUPFAM" id="SSF64263">
    <property type="entry name" value="Prokaryotic ribosomal protein L17"/>
    <property type="match status" value="1"/>
</dbReference>
<dbReference type="PROSITE" id="PS01167">
    <property type="entry name" value="RIBOSOMAL_L17"/>
    <property type="match status" value="1"/>
</dbReference>
<keyword id="KW-1185">Reference proteome</keyword>
<keyword id="KW-0687">Ribonucleoprotein</keyword>
<keyword id="KW-0689">Ribosomal protein</keyword>
<protein>
    <recommendedName>
        <fullName evidence="1">Large ribosomal subunit protein bL17</fullName>
    </recommendedName>
    <alternativeName>
        <fullName evidence="2">50S ribosomal protein L17</fullName>
    </alternativeName>
</protein>